<name>RPOA_STIHE</name>
<accession>Q06SF7</accession>
<sequence length="517" mass="59323">MGNYKSNLETKIGVVKNPILVSCRESIMENKKSFYGRFYIGPLEVGQGITLANALRRALLSELNGLAITTVEIEGVSHEYSTLMGVRESVLDILLNLKQIVLKSKKSVKRAQTAYIYCQGPGVIRAGDIILPSSIQCVDPEQYIATLSSDGILKMKVIIRQGKNYLVQTPNSLFFDEVSEFVLDKNNLAEKRSEKQSFQHKIFLQNSVNKKKWGKVEEKKEPKLSFFSHSGSRPSFLFKTKVGLKSKALTFSFQNSRSLYTISQNSKNKELFINLFKKQIYSILALKVSITKSQDPNNFSNLLCSFFLTSKNKTKPLFIDAVFMPVTKVNYTLEENKQKLFDEIYPIVSNDNLEKNWVKVKKSGFFLSNQQLSFEKNSLFEESKLQQNTNNEAKHKNNGNGKFVDSKLLKQSTTSNFDYNYWSLFSAELNNNSSSWTTLNSNIFFEHFNQSPKDIIILEIWTNGSILPRTALKHATQNLSNLFIKFQNAKMMKNSFFETNKTYTQTIRQLYEKYQNF</sequence>
<protein>
    <recommendedName>
        <fullName>DNA-directed RNA polymerase subunit alpha</fullName>
        <shortName>PEP</shortName>
        <ecNumber>2.7.7.6</ecNumber>
    </recommendedName>
    <alternativeName>
        <fullName>Plastid-encoded RNA polymerase subunit alpha</fullName>
        <shortName>RNA polymerase subunit alpha</shortName>
    </alternativeName>
</protein>
<dbReference type="EC" id="2.7.7.6"/>
<dbReference type="EMBL" id="DQ630521">
    <property type="protein sequence ID" value="ABF60189.1"/>
    <property type="molecule type" value="Genomic_DNA"/>
</dbReference>
<dbReference type="RefSeq" id="YP_764409.1">
    <property type="nucleotide sequence ID" value="NC_008372.1"/>
</dbReference>
<dbReference type="SMR" id="Q06SF7"/>
<dbReference type="GeneID" id="4308369"/>
<dbReference type="GO" id="GO:0009507">
    <property type="term" value="C:chloroplast"/>
    <property type="evidence" value="ECO:0007669"/>
    <property type="project" value="UniProtKB-SubCell"/>
</dbReference>
<dbReference type="GO" id="GO:0000428">
    <property type="term" value="C:DNA-directed RNA polymerase complex"/>
    <property type="evidence" value="ECO:0007669"/>
    <property type="project" value="UniProtKB-KW"/>
</dbReference>
<dbReference type="GO" id="GO:0005739">
    <property type="term" value="C:mitochondrion"/>
    <property type="evidence" value="ECO:0007669"/>
    <property type="project" value="GOC"/>
</dbReference>
<dbReference type="GO" id="GO:0003899">
    <property type="term" value="F:DNA-directed RNA polymerase activity"/>
    <property type="evidence" value="ECO:0007669"/>
    <property type="project" value="UniProtKB-EC"/>
</dbReference>
<dbReference type="GO" id="GO:0046983">
    <property type="term" value="F:protein dimerization activity"/>
    <property type="evidence" value="ECO:0007669"/>
    <property type="project" value="InterPro"/>
</dbReference>
<dbReference type="GO" id="GO:0006351">
    <property type="term" value="P:DNA-templated transcription"/>
    <property type="evidence" value="ECO:0007669"/>
    <property type="project" value="InterPro"/>
</dbReference>
<dbReference type="CDD" id="cd06928">
    <property type="entry name" value="RNAP_alpha_NTD"/>
    <property type="match status" value="1"/>
</dbReference>
<dbReference type="FunFam" id="2.170.120.12:FF:000001">
    <property type="entry name" value="DNA-directed RNA polymerase subunit alpha"/>
    <property type="match status" value="1"/>
</dbReference>
<dbReference type="Gene3D" id="2.170.120.12">
    <property type="entry name" value="DNA-directed RNA polymerase, insert domain"/>
    <property type="match status" value="1"/>
</dbReference>
<dbReference type="Gene3D" id="3.30.1360.10">
    <property type="entry name" value="RNA polymerase, RBP11-like subunit"/>
    <property type="match status" value="1"/>
</dbReference>
<dbReference type="InterPro" id="IPR011262">
    <property type="entry name" value="DNA-dir_RNA_pol_insert"/>
</dbReference>
<dbReference type="InterPro" id="IPR011263">
    <property type="entry name" value="DNA-dir_RNA_pol_RpoA/D/Rpb3"/>
</dbReference>
<dbReference type="InterPro" id="IPR036603">
    <property type="entry name" value="RBP11-like"/>
</dbReference>
<dbReference type="InterPro" id="IPR036643">
    <property type="entry name" value="RNApol_insert_sf"/>
</dbReference>
<dbReference type="Pfam" id="PF01000">
    <property type="entry name" value="RNA_pol_A_bac"/>
    <property type="match status" value="1"/>
</dbReference>
<dbReference type="Pfam" id="PF01193">
    <property type="entry name" value="RNA_pol_L"/>
    <property type="match status" value="1"/>
</dbReference>
<dbReference type="SMART" id="SM00662">
    <property type="entry name" value="RPOLD"/>
    <property type="match status" value="1"/>
</dbReference>
<dbReference type="SUPFAM" id="SSF56553">
    <property type="entry name" value="Insert subdomain of RNA polymerase alpha subunit"/>
    <property type="match status" value="1"/>
</dbReference>
<dbReference type="SUPFAM" id="SSF55257">
    <property type="entry name" value="RBP11-like subunits of RNA polymerase"/>
    <property type="match status" value="1"/>
</dbReference>
<organism>
    <name type="scientific">Stigeoclonium helveticum</name>
    <name type="common">Green alga</name>
    <dbReference type="NCBI Taxonomy" id="55999"/>
    <lineage>
        <taxon>Eukaryota</taxon>
        <taxon>Viridiplantae</taxon>
        <taxon>Chlorophyta</taxon>
        <taxon>core chlorophytes</taxon>
        <taxon>Chlorophyceae</taxon>
        <taxon>OCC clade</taxon>
        <taxon>Chaetophorales</taxon>
        <taxon>Chaetophoraceae</taxon>
        <taxon>Stigeoclonium</taxon>
    </lineage>
</organism>
<evidence type="ECO:0000250" key="1"/>
<evidence type="ECO:0000305" key="2"/>
<keyword id="KW-0150">Chloroplast</keyword>
<keyword id="KW-0240">DNA-directed RNA polymerase</keyword>
<keyword id="KW-0548">Nucleotidyltransferase</keyword>
<keyword id="KW-0934">Plastid</keyword>
<keyword id="KW-0804">Transcription</keyword>
<keyword id="KW-0808">Transferase</keyword>
<feature type="chain" id="PRO_0000296910" description="DNA-directed RNA polymerase subunit alpha">
    <location>
        <begin position="1"/>
        <end position="517"/>
    </location>
</feature>
<geneLocation type="chloroplast"/>
<proteinExistence type="inferred from homology"/>
<gene>
    <name type="primary">rpoA</name>
</gene>
<reference key="1">
    <citation type="journal article" date="2006" name="Mol. Genet. Genomics">
        <title>Distinctive architecture of the chloroplast genome in the chlorophycean green alga Stigeoclonium helveticum.</title>
        <authorList>
            <person name="Belanger A.-S."/>
            <person name="Brouard J.-S."/>
            <person name="Charlebois P."/>
            <person name="Otis C."/>
            <person name="Lemieux C."/>
            <person name="Turmel M."/>
        </authorList>
    </citation>
    <scope>NUCLEOTIDE SEQUENCE [LARGE SCALE GENOMIC DNA]</scope>
    <source>
        <strain>UTEX 441</strain>
    </source>
</reference>
<comment type="function">
    <text evidence="1">DNA-dependent RNA polymerase catalyzes the transcription of DNA into RNA using the four ribonucleoside triphosphates as substrates.</text>
</comment>
<comment type="catalytic activity">
    <reaction>
        <text>RNA(n) + a ribonucleoside 5'-triphosphate = RNA(n+1) + diphosphate</text>
        <dbReference type="Rhea" id="RHEA:21248"/>
        <dbReference type="Rhea" id="RHEA-COMP:14527"/>
        <dbReference type="Rhea" id="RHEA-COMP:17342"/>
        <dbReference type="ChEBI" id="CHEBI:33019"/>
        <dbReference type="ChEBI" id="CHEBI:61557"/>
        <dbReference type="ChEBI" id="CHEBI:140395"/>
        <dbReference type="EC" id="2.7.7.6"/>
    </reaction>
</comment>
<comment type="subunit">
    <text evidence="1">In plastids the minimal PEP RNA polymerase catalytic core is composed of four subunits: alpha, beta, beta', and beta''. When a (nuclear-encoded) sigma factor is associated with the core the holoenzyme is formed, which can initiate transcription (By similarity).</text>
</comment>
<comment type="subcellular location">
    <subcellularLocation>
        <location>Plastid</location>
        <location>Chloroplast</location>
    </subcellularLocation>
</comment>
<comment type="domain">
    <text evidence="1">The N-terminal domain is essential for RNAP assembly and basal transcription, whereas the C-terminal domain is involved in interaction with transcriptional regulators and with upstream promoter elements.</text>
</comment>
<comment type="similarity">
    <text evidence="2">Belongs to the RNA polymerase alpha chain family.</text>
</comment>